<gene>
    <name evidence="11" type="primary">spartin</name>
    <name type="ORF">CG12001</name>
</gene>
<protein>
    <recommendedName>
        <fullName evidence="7">Protein spartin</fullName>
    </recommendedName>
</protein>
<dbReference type="EMBL" id="AE014297">
    <property type="protein sequence ID" value="AAF52106.1"/>
    <property type="molecule type" value="Genomic_DNA"/>
</dbReference>
<dbReference type="EMBL" id="BT006015">
    <property type="protein sequence ID" value="AAO74698.1"/>
    <property type="molecule type" value="mRNA"/>
</dbReference>
<dbReference type="RefSeq" id="NP_001246910.1">
    <property type="nucleotide sequence ID" value="NM_001259981.1"/>
</dbReference>
<dbReference type="RefSeq" id="NP_649485.1">
    <property type="nucleotide sequence ID" value="NM_141228.2"/>
</dbReference>
<dbReference type="SMR" id="Q9VN45"/>
<dbReference type="BioGRID" id="65801">
    <property type="interactions" value="10"/>
</dbReference>
<dbReference type="FunCoup" id="Q9VN45">
    <property type="interactions" value="418"/>
</dbReference>
<dbReference type="IntAct" id="Q9VN45">
    <property type="interactions" value="3"/>
</dbReference>
<dbReference type="STRING" id="7227.FBpp0078501"/>
<dbReference type="PaxDb" id="7227-FBpp0078501"/>
<dbReference type="EnsemblMetazoa" id="FBtr0078861">
    <property type="protein sequence ID" value="FBpp0078501"/>
    <property type="gene ID" value="FBgn0037265"/>
</dbReference>
<dbReference type="EnsemblMetazoa" id="FBtr0308820">
    <property type="protein sequence ID" value="FBpp0300977"/>
    <property type="gene ID" value="FBgn0037265"/>
</dbReference>
<dbReference type="GeneID" id="40582"/>
<dbReference type="KEGG" id="dme:Dmel_CG12001"/>
<dbReference type="UCSC" id="CG12001-RA">
    <property type="organism name" value="d. melanogaster"/>
</dbReference>
<dbReference type="AGR" id="FB:FBgn0037265"/>
<dbReference type="CTD" id="40582"/>
<dbReference type="FlyBase" id="FBgn0037265">
    <property type="gene designation" value="spartin"/>
</dbReference>
<dbReference type="VEuPathDB" id="VectorBase:FBgn0037265"/>
<dbReference type="eggNOG" id="KOG2709">
    <property type="taxonomic scope" value="Eukaryota"/>
</dbReference>
<dbReference type="GeneTree" id="ENSGT00390000012235"/>
<dbReference type="HOGENOM" id="CLU_019310_1_0_1"/>
<dbReference type="InParanoid" id="Q9VN45"/>
<dbReference type="OMA" id="RKPESHY"/>
<dbReference type="OrthoDB" id="20821at2759"/>
<dbReference type="PhylomeDB" id="Q9VN45"/>
<dbReference type="BioGRID-ORCS" id="40582">
    <property type="hits" value="1 hit in 1 CRISPR screen"/>
</dbReference>
<dbReference type="GenomeRNAi" id="40582"/>
<dbReference type="PRO" id="PR:Q9VN45"/>
<dbReference type="Proteomes" id="UP000000803">
    <property type="component" value="Chromosome 3R"/>
</dbReference>
<dbReference type="Bgee" id="FBgn0037265">
    <property type="expression patterns" value="Expressed in seminal fluid secreting gland and 55 other cell types or tissues"/>
</dbReference>
<dbReference type="ExpressionAtlas" id="Q9VN45">
    <property type="expression patterns" value="baseline and differential"/>
</dbReference>
<dbReference type="GO" id="GO:0005769">
    <property type="term" value="C:early endosome"/>
    <property type="evidence" value="ECO:0000314"/>
    <property type="project" value="FlyBase"/>
</dbReference>
<dbReference type="GO" id="GO:0005811">
    <property type="term" value="C:lipid droplet"/>
    <property type="evidence" value="ECO:0007669"/>
    <property type="project" value="UniProtKB-SubCell"/>
</dbReference>
<dbReference type="GO" id="GO:0005739">
    <property type="term" value="C:mitochondrion"/>
    <property type="evidence" value="ECO:0000314"/>
    <property type="project" value="FlyBase"/>
</dbReference>
<dbReference type="GO" id="GO:0005886">
    <property type="term" value="C:plasma membrane"/>
    <property type="evidence" value="ECO:0000314"/>
    <property type="project" value="FlyBase"/>
</dbReference>
<dbReference type="GO" id="GO:0042734">
    <property type="term" value="C:presynaptic membrane"/>
    <property type="evidence" value="ECO:0000314"/>
    <property type="project" value="FlyBase"/>
</dbReference>
<dbReference type="GO" id="GO:0043195">
    <property type="term" value="C:terminal bouton"/>
    <property type="evidence" value="ECO:0000314"/>
    <property type="project" value="FlyBase"/>
</dbReference>
<dbReference type="GO" id="GO:0031267">
    <property type="term" value="F:small GTPase binding"/>
    <property type="evidence" value="ECO:0000353"/>
    <property type="project" value="FlyBase"/>
</dbReference>
<dbReference type="GO" id="GO:0051301">
    <property type="term" value="P:cell division"/>
    <property type="evidence" value="ECO:0000318"/>
    <property type="project" value="GO_Central"/>
</dbReference>
<dbReference type="GO" id="GO:0030514">
    <property type="term" value="P:negative regulation of BMP signaling pathway"/>
    <property type="evidence" value="ECO:0000316"/>
    <property type="project" value="FlyBase"/>
</dbReference>
<dbReference type="GO" id="GO:0045886">
    <property type="term" value="P:negative regulation of synaptic assembly at neuromuscular junction"/>
    <property type="evidence" value="ECO:0000315"/>
    <property type="project" value="FlyBase"/>
</dbReference>
<dbReference type="GO" id="GO:0007399">
    <property type="term" value="P:nervous system development"/>
    <property type="evidence" value="ECO:0007669"/>
    <property type="project" value="UniProtKB-KW"/>
</dbReference>
<dbReference type="GO" id="GO:0002092">
    <property type="term" value="P:positive regulation of receptor internalization"/>
    <property type="evidence" value="ECO:0000316"/>
    <property type="project" value="FlyBase"/>
</dbReference>
<dbReference type="CDD" id="cd02679">
    <property type="entry name" value="MIT_spastin"/>
    <property type="match status" value="1"/>
</dbReference>
<dbReference type="Gene3D" id="1.20.58.80">
    <property type="entry name" value="Phosphotransferase system, lactose/cellobiose-type IIA subunit"/>
    <property type="match status" value="1"/>
</dbReference>
<dbReference type="InterPro" id="IPR007330">
    <property type="entry name" value="MIT_dom"/>
</dbReference>
<dbReference type="InterPro" id="IPR009686">
    <property type="entry name" value="Senescence/spartin_C"/>
</dbReference>
<dbReference type="InterPro" id="IPR045036">
    <property type="entry name" value="Spartin-like"/>
</dbReference>
<dbReference type="PANTHER" id="PTHR21068">
    <property type="entry name" value="SPARTIN"/>
    <property type="match status" value="1"/>
</dbReference>
<dbReference type="PANTHER" id="PTHR21068:SF43">
    <property type="entry name" value="SPARTIN"/>
    <property type="match status" value="1"/>
</dbReference>
<dbReference type="Pfam" id="PF06911">
    <property type="entry name" value="Senescence"/>
    <property type="match status" value="1"/>
</dbReference>
<dbReference type="SMART" id="SM00745">
    <property type="entry name" value="MIT"/>
    <property type="match status" value="1"/>
</dbReference>
<proteinExistence type="evidence at protein level"/>
<sequence>MAEEESEFLEAYAGIRTAYKAAMTQVDLAVSHEEQESPGQAIVAYELALRMIEDTFGIPVGLPNKIDTVQAEWNDACALIQKLKSAETELRYRLKVLRSQKQSIDDSAVEATEESRAEMDTKRPPLLAENPSTQYGIANASGAPKTYRELAAGLRELLAVRDAKVLLDELFRAQVKMYRIEASGSVTTISGSSTMSLVMCTVGGKWKYLSGIYFIQCSMPNEGTAGIWLYPLVPSITNCYQTEYGAFIFPDMECQQPGNAFGLMLTKEGQTSRTEDELEDLQQFFLDLLEAVLAGTVVQLKSPTSQRAGLASDTVSGSEQVSRHIVSAADFIASNLVRGAEKTGGFMLRSTPYIISKMTPASMDAQVPSSVQTSVEVAQKVTHAAAGMTGWIAGKVGTASMAVGRYLAPHIQEQGSKLLQKGFGYDTSEANSTMEGAMTIAAGAVEGVSTVFDGLETSAKILGSSLSENSVKIIEHKYGQQTGNLASGTFDTVGNVFVVSQNVNYITPKGIAKKMVKRTGEAVVSDYKRDLRKSESHYINAGSLYPDLRALKE</sequence>
<name>SPART_DROME</name>
<keyword id="KW-1003">Cell membrane</keyword>
<keyword id="KW-0966">Cell projection</keyword>
<keyword id="KW-0217">Developmental protein</keyword>
<keyword id="KW-0967">Endosome</keyword>
<keyword id="KW-0551">Lipid droplet</keyword>
<keyword id="KW-0472">Membrane</keyword>
<keyword id="KW-0523">Neurodegeneration</keyword>
<keyword id="KW-0524">Neurogenesis</keyword>
<keyword id="KW-1185">Reference proteome</keyword>
<keyword id="KW-0691">RNA editing</keyword>
<keyword id="KW-0770">Synapse</keyword>
<organism>
    <name type="scientific">Drosophila melanogaster</name>
    <name type="common">Fruit fly</name>
    <dbReference type="NCBI Taxonomy" id="7227"/>
    <lineage>
        <taxon>Eukaryota</taxon>
        <taxon>Metazoa</taxon>
        <taxon>Ecdysozoa</taxon>
        <taxon>Arthropoda</taxon>
        <taxon>Hexapoda</taxon>
        <taxon>Insecta</taxon>
        <taxon>Pterygota</taxon>
        <taxon>Neoptera</taxon>
        <taxon>Endopterygota</taxon>
        <taxon>Diptera</taxon>
        <taxon>Brachycera</taxon>
        <taxon>Muscomorpha</taxon>
        <taxon>Ephydroidea</taxon>
        <taxon>Drosophilidae</taxon>
        <taxon>Drosophila</taxon>
        <taxon>Sophophora</taxon>
    </lineage>
</organism>
<comment type="function">
    <text evidence="5">During postembryonic development, functions with endocytic adapter Eps-15 in neurons to restrain synaptic growth, by inhibiting BMP signaling, and to control synaptic endocytosis. Required presynaptically for neuromuscular junction (NMJ) neurotransmission. Inhibits neuronal BMP signaling by promoting endocytic internalization and subsequent endosomal trafficking of the BMP receptor wit. In this way, regulates the Fmr1 translational regulator controlling Futsch expression to modulate neuronal microtubule stability, which controls both synaptogenesis and neuronal survival.</text>
</comment>
<comment type="subunit">
    <text evidence="5">Interacts with Eps-15 (via C-terminal region); the interaction is required for spartin localization to the NMJ presynaptic membrane.</text>
</comment>
<comment type="subcellular location">
    <subcellularLocation>
        <location evidence="5">Presynaptic cell membrane</location>
    </subcellularLocation>
    <subcellularLocation>
        <location evidence="5">Early endosome</location>
    </subcellularLocation>
    <subcellularLocation>
        <location evidence="5">Lipid droplet</location>
    </subcellularLocation>
    <text evidence="5">Colocalizes with Eps-15 at presynaptic cell membrane.</text>
</comment>
<comment type="tissue specificity">
    <text evidence="5">Expressed in larval brain, ventral nerve cord and neuropil (at protein level).</text>
</comment>
<comment type="RNA editing">
    <location>
        <position position="325" evidence="4 6"/>
    </location>
    <text evidence="4">Partially edited. Target of Adar.</text>
</comment>
<comment type="disruption phenotype">
    <text evidence="5">Mutant larvae show an overgrowth of the third-instar NMJ, with an overall bouton number and satellite bouton number increase of 40% and 90%, respectively, compared with wild type. Mutant larvae also show a decrease in the amplitude of evoked excitatory junction currents (EJCs), but normal spontaneous miniature EJCs (mEJCs) and axonal transport. Adult mutants display reduced locomotor activity and progressive vacuolization in the brain, which is associated with neurodegeneration.</text>
</comment>
<evidence type="ECO:0000255" key="1"/>
<evidence type="ECO:0000256" key="2">
    <source>
        <dbReference type="SAM" id="MobiDB-lite"/>
    </source>
</evidence>
<evidence type="ECO:0000269" key="3">
    <source>
    </source>
</evidence>
<evidence type="ECO:0000269" key="4">
    <source>
    </source>
</evidence>
<evidence type="ECO:0000269" key="5">
    <source>
    </source>
</evidence>
<evidence type="ECO:0000269" key="6">
    <source ref="3"/>
</evidence>
<evidence type="ECO:0000303" key="7">
    <source>
    </source>
</evidence>
<evidence type="ECO:0000305" key="8"/>
<evidence type="ECO:0000312" key="9">
    <source>
        <dbReference type="EMBL" id="AAF52106.1"/>
    </source>
</evidence>
<evidence type="ECO:0000312" key="10">
    <source>
        <dbReference type="EMBL" id="AAO74698.1"/>
    </source>
</evidence>
<evidence type="ECO:0000312" key="11">
    <source>
        <dbReference type="FlyBase" id="FBgn0037265"/>
    </source>
</evidence>
<accession>Q9VN45</accession>
<accession>Q86MQ7</accession>
<feature type="chain" id="PRO_0000337156" description="Protein spartin">
    <location>
        <begin position="1"/>
        <end position="553"/>
    </location>
</feature>
<feature type="domain" description="MIT">
    <location>
        <begin position="15"/>
        <end position="96"/>
    </location>
</feature>
<feature type="domain" description="Senescence" evidence="1">
    <location>
        <begin position="325"/>
        <end position="509"/>
    </location>
</feature>
<feature type="region of interest" description="Disordered" evidence="2">
    <location>
        <begin position="105"/>
        <end position="130"/>
    </location>
</feature>
<feature type="compositionally biased region" description="Basic and acidic residues" evidence="2">
    <location>
        <begin position="113"/>
        <end position="123"/>
    </location>
</feature>
<feature type="sequence variant" description="In RNA edited version." evidence="4">
    <original>I</original>
    <variation>V</variation>
    <location>
        <position position="325"/>
    </location>
</feature>
<reference evidence="9" key="1">
    <citation type="journal article" date="2000" name="Science">
        <title>The genome sequence of Drosophila melanogaster.</title>
        <authorList>
            <person name="Adams M.D."/>
            <person name="Celniker S.E."/>
            <person name="Holt R.A."/>
            <person name="Evans C.A."/>
            <person name="Gocayne J.D."/>
            <person name="Amanatides P.G."/>
            <person name="Scherer S.E."/>
            <person name="Li P.W."/>
            <person name="Hoskins R.A."/>
            <person name="Galle R.F."/>
            <person name="George R.A."/>
            <person name="Lewis S.E."/>
            <person name="Richards S."/>
            <person name="Ashburner M."/>
            <person name="Henderson S.N."/>
            <person name="Sutton G.G."/>
            <person name="Wortman J.R."/>
            <person name="Yandell M.D."/>
            <person name="Zhang Q."/>
            <person name="Chen L.X."/>
            <person name="Brandon R.C."/>
            <person name="Rogers Y.-H.C."/>
            <person name="Blazej R.G."/>
            <person name="Champe M."/>
            <person name="Pfeiffer B.D."/>
            <person name="Wan K.H."/>
            <person name="Doyle C."/>
            <person name="Baxter E.G."/>
            <person name="Helt G."/>
            <person name="Nelson C.R."/>
            <person name="Miklos G.L.G."/>
            <person name="Abril J.F."/>
            <person name="Agbayani A."/>
            <person name="An H.-J."/>
            <person name="Andrews-Pfannkoch C."/>
            <person name="Baldwin D."/>
            <person name="Ballew R.M."/>
            <person name="Basu A."/>
            <person name="Baxendale J."/>
            <person name="Bayraktaroglu L."/>
            <person name="Beasley E.M."/>
            <person name="Beeson K.Y."/>
            <person name="Benos P.V."/>
            <person name="Berman B.P."/>
            <person name="Bhandari D."/>
            <person name="Bolshakov S."/>
            <person name="Borkova D."/>
            <person name="Botchan M.R."/>
            <person name="Bouck J."/>
            <person name="Brokstein P."/>
            <person name="Brottier P."/>
            <person name="Burtis K.C."/>
            <person name="Busam D.A."/>
            <person name="Butler H."/>
            <person name="Cadieu E."/>
            <person name="Center A."/>
            <person name="Chandra I."/>
            <person name="Cherry J.M."/>
            <person name="Cawley S."/>
            <person name="Dahlke C."/>
            <person name="Davenport L.B."/>
            <person name="Davies P."/>
            <person name="de Pablos B."/>
            <person name="Delcher A."/>
            <person name="Deng Z."/>
            <person name="Mays A.D."/>
            <person name="Dew I."/>
            <person name="Dietz S.M."/>
            <person name="Dodson K."/>
            <person name="Doup L.E."/>
            <person name="Downes M."/>
            <person name="Dugan-Rocha S."/>
            <person name="Dunkov B.C."/>
            <person name="Dunn P."/>
            <person name="Durbin K.J."/>
            <person name="Evangelista C.C."/>
            <person name="Ferraz C."/>
            <person name="Ferriera S."/>
            <person name="Fleischmann W."/>
            <person name="Fosler C."/>
            <person name="Gabrielian A.E."/>
            <person name="Garg N.S."/>
            <person name="Gelbart W.M."/>
            <person name="Glasser K."/>
            <person name="Glodek A."/>
            <person name="Gong F."/>
            <person name="Gorrell J.H."/>
            <person name="Gu Z."/>
            <person name="Guan P."/>
            <person name="Harris M."/>
            <person name="Harris N.L."/>
            <person name="Harvey D.A."/>
            <person name="Heiman T.J."/>
            <person name="Hernandez J.R."/>
            <person name="Houck J."/>
            <person name="Hostin D."/>
            <person name="Houston K.A."/>
            <person name="Howland T.J."/>
            <person name="Wei M.-H."/>
            <person name="Ibegwam C."/>
            <person name="Jalali M."/>
            <person name="Kalush F."/>
            <person name="Karpen G.H."/>
            <person name="Ke Z."/>
            <person name="Kennison J.A."/>
            <person name="Ketchum K.A."/>
            <person name="Kimmel B.E."/>
            <person name="Kodira C.D."/>
            <person name="Kraft C.L."/>
            <person name="Kravitz S."/>
            <person name="Kulp D."/>
            <person name="Lai Z."/>
            <person name="Lasko P."/>
            <person name="Lei Y."/>
            <person name="Levitsky A.A."/>
            <person name="Li J.H."/>
            <person name="Li Z."/>
            <person name="Liang Y."/>
            <person name="Lin X."/>
            <person name="Liu X."/>
            <person name="Mattei B."/>
            <person name="McIntosh T.C."/>
            <person name="McLeod M.P."/>
            <person name="McPherson D."/>
            <person name="Merkulov G."/>
            <person name="Milshina N.V."/>
            <person name="Mobarry C."/>
            <person name="Morris J."/>
            <person name="Moshrefi A."/>
            <person name="Mount S.M."/>
            <person name="Moy M."/>
            <person name="Murphy B."/>
            <person name="Murphy L."/>
            <person name="Muzny D.M."/>
            <person name="Nelson D.L."/>
            <person name="Nelson D.R."/>
            <person name="Nelson K.A."/>
            <person name="Nixon K."/>
            <person name="Nusskern D.R."/>
            <person name="Pacleb J.M."/>
            <person name="Palazzolo M."/>
            <person name="Pittman G.S."/>
            <person name="Pan S."/>
            <person name="Pollard J."/>
            <person name="Puri V."/>
            <person name="Reese M.G."/>
            <person name="Reinert K."/>
            <person name="Remington K."/>
            <person name="Saunders R.D.C."/>
            <person name="Scheeler F."/>
            <person name="Shen H."/>
            <person name="Shue B.C."/>
            <person name="Siden-Kiamos I."/>
            <person name="Simpson M."/>
            <person name="Skupski M.P."/>
            <person name="Smith T.J."/>
            <person name="Spier E."/>
            <person name="Spradling A.C."/>
            <person name="Stapleton M."/>
            <person name="Strong R."/>
            <person name="Sun E."/>
            <person name="Svirskas R."/>
            <person name="Tector C."/>
            <person name="Turner R."/>
            <person name="Venter E."/>
            <person name="Wang A.H."/>
            <person name="Wang X."/>
            <person name="Wang Z.-Y."/>
            <person name="Wassarman D.A."/>
            <person name="Weinstock G.M."/>
            <person name="Weissenbach J."/>
            <person name="Williams S.M."/>
            <person name="Woodage T."/>
            <person name="Worley K.C."/>
            <person name="Wu D."/>
            <person name="Yang S."/>
            <person name="Yao Q.A."/>
            <person name="Ye J."/>
            <person name="Yeh R.-F."/>
            <person name="Zaveri J.S."/>
            <person name="Zhan M."/>
            <person name="Zhang G."/>
            <person name="Zhao Q."/>
            <person name="Zheng L."/>
            <person name="Zheng X.H."/>
            <person name="Zhong F.N."/>
            <person name="Zhong W."/>
            <person name="Zhou X."/>
            <person name="Zhu S.C."/>
            <person name="Zhu X."/>
            <person name="Smith H.O."/>
            <person name="Gibbs R.A."/>
            <person name="Myers E.W."/>
            <person name="Rubin G.M."/>
            <person name="Venter J.C."/>
        </authorList>
    </citation>
    <scope>NUCLEOTIDE SEQUENCE [LARGE SCALE GENOMIC DNA]</scope>
    <source>
        <strain evidence="3">Berkeley</strain>
    </source>
</reference>
<reference evidence="8 9" key="2">
    <citation type="journal article" date="2002" name="Genome Biol.">
        <title>Annotation of the Drosophila melanogaster euchromatic genome: a systematic review.</title>
        <authorList>
            <person name="Misra S."/>
            <person name="Crosby M.A."/>
            <person name="Mungall C.J."/>
            <person name="Matthews B.B."/>
            <person name="Campbell K.S."/>
            <person name="Hradecky P."/>
            <person name="Huang Y."/>
            <person name="Kaminker J.S."/>
            <person name="Millburn G.H."/>
            <person name="Prochnik S.E."/>
            <person name="Smith C.D."/>
            <person name="Tupy J.L."/>
            <person name="Whitfield E.J."/>
            <person name="Bayraktaroglu L."/>
            <person name="Berman B.P."/>
            <person name="Bettencourt B.R."/>
            <person name="Celniker S.E."/>
            <person name="de Grey A.D.N.J."/>
            <person name="Drysdale R.A."/>
            <person name="Harris N.L."/>
            <person name="Richter J."/>
            <person name="Russo S."/>
            <person name="Schroeder A.J."/>
            <person name="Shu S.Q."/>
            <person name="Stapleton M."/>
            <person name="Yamada C."/>
            <person name="Ashburner M."/>
            <person name="Gelbart W.M."/>
            <person name="Rubin G.M."/>
            <person name="Lewis S.E."/>
        </authorList>
    </citation>
    <scope>GENOME REANNOTATION</scope>
    <source>
        <strain>Berkeley</strain>
    </source>
</reference>
<reference evidence="8 10" key="3">
    <citation type="submission" date="2003-03" db="EMBL/GenBank/DDBJ databases">
        <authorList>
            <person name="Stapleton M."/>
            <person name="Brokstein P."/>
            <person name="Hong L."/>
            <person name="Agbayani A."/>
            <person name="Carlson J.W."/>
            <person name="Champe M."/>
            <person name="Chavez C."/>
            <person name="Dorsett V."/>
            <person name="Dresnek D."/>
            <person name="Farfan D."/>
            <person name="Frise E."/>
            <person name="George R.A."/>
            <person name="Gonzalez M."/>
            <person name="Guarin H."/>
            <person name="Kronmiller B."/>
            <person name="Li P.W."/>
            <person name="Liao G."/>
            <person name="Miranda A."/>
            <person name="Mungall C.J."/>
            <person name="Nunoo J."/>
            <person name="Pacleb J.M."/>
            <person name="Paragas V."/>
            <person name="Park S."/>
            <person name="Patel S."/>
            <person name="Phouanenavong S."/>
            <person name="Wan K.H."/>
            <person name="Yu C."/>
            <person name="Lewis S.E."/>
            <person name="Rubin G.M."/>
            <person name="Celniker S.E."/>
        </authorList>
    </citation>
    <scope>NUCLEOTIDE SEQUENCE [LARGE SCALE MRNA]</scope>
    <scope>RNA EDITING OF POSITION 325</scope>
    <source>
        <strain evidence="10">Berkeley</strain>
    </source>
</reference>
<reference evidence="8" key="4">
    <citation type="journal article" date="2006" name="RNA">
        <title>RNA editing in Drosophila melanogaster: new targets and functional consequences.</title>
        <authorList>
            <person name="Stapleton M."/>
            <person name="Carlson J.W."/>
            <person name="Celniker S.E."/>
        </authorList>
    </citation>
    <scope>RNA EDITING OF POSITION 325</scope>
</reference>
<reference evidence="8" key="5">
    <citation type="journal article" date="2013" name="Neuron">
        <title>Spartin regulates synaptic growth and neuronal survival by inhibiting BMP-mediated microtubule stabilization.</title>
        <authorList>
            <person name="Nahm M."/>
            <person name="Lee M.J."/>
            <person name="Parkinson W."/>
            <person name="Lee M."/>
            <person name="Kim H."/>
            <person name="Kim Y.J."/>
            <person name="Kim S."/>
            <person name="Cho Y.S."/>
            <person name="Min B.M."/>
            <person name="Bae Y.C."/>
            <person name="Broadie K."/>
            <person name="Lee S."/>
        </authorList>
    </citation>
    <scope>FUNCTION</scope>
    <scope>INTERACTION WITH EPS-15</scope>
    <scope>SUBCELLULAR LOCATION</scope>
    <scope>TISSUE SPECIFICITY</scope>
    <scope>DISRUPTION PHENOTYPE</scope>
</reference>